<sequence>MALTKIELAESLVEKCGFDKRIAKLFVEQFFEEIRSSLEKGEEVKLSGFGNFSLREKNARPGRNPKTGETVAVTARRVVVFKPGQKLRDRVENVKVKA</sequence>
<feature type="chain" id="PRO_1000122125" description="Integration host factor subunit alpha">
    <location>
        <begin position="1"/>
        <end position="98"/>
    </location>
</feature>
<proteinExistence type="inferred from homology"/>
<accession>B3H139</accession>
<evidence type="ECO:0000255" key="1">
    <source>
        <dbReference type="HAMAP-Rule" id="MF_00380"/>
    </source>
</evidence>
<comment type="function">
    <text evidence="1">This protein is one of the two subunits of integration host factor, a specific DNA-binding protein that functions in genetic recombination as well as in transcriptional and translational control.</text>
</comment>
<comment type="subunit">
    <text evidence="1">Heterodimer of an alpha and a beta chain.</text>
</comment>
<comment type="similarity">
    <text evidence="1">Belongs to the bacterial histone-like protein family.</text>
</comment>
<reference key="1">
    <citation type="submission" date="2008-06" db="EMBL/GenBank/DDBJ databases">
        <title>Genome and proteome analysis of A. pleuropneumoniae serotype 7.</title>
        <authorList>
            <person name="Linke B."/>
            <person name="Buettner F."/>
            <person name="Martinez-Arias R."/>
            <person name="Goesmann A."/>
            <person name="Baltes N."/>
            <person name="Tegetmeyer H."/>
            <person name="Singh M."/>
            <person name="Gerlach G.F."/>
        </authorList>
    </citation>
    <scope>NUCLEOTIDE SEQUENCE [LARGE SCALE GENOMIC DNA]</scope>
    <source>
        <strain>AP76</strain>
    </source>
</reference>
<protein>
    <recommendedName>
        <fullName evidence="1">Integration host factor subunit alpha</fullName>
        <shortName evidence="1">IHF-alpha</shortName>
    </recommendedName>
</protein>
<name>IHFA_ACTP7</name>
<gene>
    <name evidence="1" type="primary">ihfA</name>
    <name evidence="1" type="synonym">himA</name>
    <name type="ordered locus">APP7_0656</name>
</gene>
<keyword id="KW-0233">DNA recombination</keyword>
<keyword id="KW-0238">DNA-binding</keyword>
<keyword id="KW-0804">Transcription</keyword>
<keyword id="KW-0805">Transcription regulation</keyword>
<keyword id="KW-0810">Translation regulation</keyword>
<organism>
    <name type="scientific">Actinobacillus pleuropneumoniae serotype 7 (strain AP76)</name>
    <dbReference type="NCBI Taxonomy" id="537457"/>
    <lineage>
        <taxon>Bacteria</taxon>
        <taxon>Pseudomonadati</taxon>
        <taxon>Pseudomonadota</taxon>
        <taxon>Gammaproteobacteria</taxon>
        <taxon>Pasteurellales</taxon>
        <taxon>Pasteurellaceae</taxon>
        <taxon>Actinobacillus</taxon>
    </lineage>
</organism>
<dbReference type="EMBL" id="CP001091">
    <property type="protein sequence ID" value="ACE61308.1"/>
    <property type="molecule type" value="Genomic_DNA"/>
</dbReference>
<dbReference type="RefSeq" id="WP_005596864.1">
    <property type="nucleotide sequence ID" value="NC_010939.1"/>
</dbReference>
<dbReference type="SMR" id="B3H139"/>
<dbReference type="KEGG" id="apa:APP7_0656"/>
<dbReference type="HOGENOM" id="CLU_105066_1_3_6"/>
<dbReference type="Proteomes" id="UP000001226">
    <property type="component" value="Chromosome"/>
</dbReference>
<dbReference type="GO" id="GO:0005829">
    <property type="term" value="C:cytosol"/>
    <property type="evidence" value="ECO:0007669"/>
    <property type="project" value="TreeGrafter"/>
</dbReference>
<dbReference type="GO" id="GO:0003677">
    <property type="term" value="F:DNA binding"/>
    <property type="evidence" value="ECO:0007669"/>
    <property type="project" value="UniProtKB-UniRule"/>
</dbReference>
<dbReference type="GO" id="GO:0030527">
    <property type="term" value="F:structural constituent of chromatin"/>
    <property type="evidence" value="ECO:0007669"/>
    <property type="project" value="InterPro"/>
</dbReference>
<dbReference type="GO" id="GO:0006310">
    <property type="term" value="P:DNA recombination"/>
    <property type="evidence" value="ECO:0007669"/>
    <property type="project" value="UniProtKB-UniRule"/>
</dbReference>
<dbReference type="GO" id="GO:0009893">
    <property type="term" value="P:positive regulation of metabolic process"/>
    <property type="evidence" value="ECO:0007669"/>
    <property type="project" value="UniProtKB-ARBA"/>
</dbReference>
<dbReference type="GO" id="GO:0006355">
    <property type="term" value="P:regulation of DNA-templated transcription"/>
    <property type="evidence" value="ECO:0007669"/>
    <property type="project" value="UniProtKB-UniRule"/>
</dbReference>
<dbReference type="GO" id="GO:0006417">
    <property type="term" value="P:regulation of translation"/>
    <property type="evidence" value="ECO:0007669"/>
    <property type="project" value="UniProtKB-UniRule"/>
</dbReference>
<dbReference type="CDD" id="cd13835">
    <property type="entry name" value="IHF_A"/>
    <property type="match status" value="1"/>
</dbReference>
<dbReference type="Gene3D" id="4.10.520.10">
    <property type="entry name" value="IHF-like DNA-binding proteins"/>
    <property type="match status" value="1"/>
</dbReference>
<dbReference type="HAMAP" id="MF_00380">
    <property type="entry name" value="IHF_alpha"/>
    <property type="match status" value="1"/>
</dbReference>
<dbReference type="InterPro" id="IPR000119">
    <property type="entry name" value="Hist_DNA-bd"/>
</dbReference>
<dbReference type="InterPro" id="IPR020816">
    <property type="entry name" value="Histone-like_DNA-bd_CS"/>
</dbReference>
<dbReference type="InterPro" id="IPR010992">
    <property type="entry name" value="IHF-like_DNA-bd_dom_sf"/>
</dbReference>
<dbReference type="InterPro" id="IPR005684">
    <property type="entry name" value="IHF_alpha"/>
</dbReference>
<dbReference type="NCBIfam" id="TIGR00987">
    <property type="entry name" value="himA"/>
    <property type="match status" value="1"/>
</dbReference>
<dbReference type="NCBIfam" id="NF001401">
    <property type="entry name" value="PRK00285.1"/>
    <property type="match status" value="1"/>
</dbReference>
<dbReference type="PANTHER" id="PTHR33175">
    <property type="entry name" value="DNA-BINDING PROTEIN HU"/>
    <property type="match status" value="1"/>
</dbReference>
<dbReference type="PANTHER" id="PTHR33175:SF2">
    <property type="entry name" value="INTEGRATION HOST FACTOR SUBUNIT ALPHA"/>
    <property type="match status" value="1"/>
</dbReference>
<dbReference type="Pfam" id="PF00216">
    <property type="entry name" value="Bac_DNA_binding"/>
    <property type="match status" value="1"/>
</dbReference>
<dbReference type="PRINTS" id="PR01727">
    <property type="entry name" value="DNABINDINGHU"/>
</dbReference>
<dbReference type="SMART" id="SM00411">
    <property type="entry name" value="BHL"/>
    <property type="match status" value="1"/>
</dbReference>
<dbReference type="SUPFAM" id="SSF47729">
    <property type="entry name" value="IHF-like DNA-binding proteins"/>
    <property type="match status" value="1"/>
</dbReference>
<dbReference type="PROSITE" id="PS00045">
    <property type="entry name" value="HISTONE_LIKE"/>
    <property type="match status" value="1"/>
</dbReference>